<keyword id="KW-1003">Cell membrane</keyword>
<keyword id="KW-1015">Disulfide bond</keyword>
<keyword id="KW-0297">G-protein coupled receptor</keyword>
<keyword id="KW-0325">Glycoprotein</keyword>
<keyword id="KW-0472">Membrane</keyword>
<keyword id="KW-0589">Pheromone response</keyword>
<keyword id="KW-0675">Receptor</keyword>
<keyword id="KW-1185">Reference proteome</keyword>
<keyword id="KW-0807">Transducer</keyword>
<keyword id="KW-0812">Transmembrane</keyword>
<keyword id="KW-1133">Transmembrane helix</keyword>
<accession>Q5J3L4</accession>
<comment type="function">
    <text evidence="1">Putative pheromone receptor implicated in the regulation of social as well as reproductive behavior.</text>
</comment>
<comment type="subcellular location">
    <subcellularLocation>
        <location evidence="4">Cell membrane</location>
        <topology evidence="2">Multi-pass membrane protein</topology>
    </subcellularLocation>
</comment>
<comment type="similarity">
    <text evidence="3">Belongs to the G-protein coupled receptor 1 family.</text>
</comment>
<sequence>MNKVNILPSDTNIKITLFSEVSVGISANSVLFFAHLCMFFEENRSKPIDLCIAFLSLTQLMLLVTMGLIAADMFMSQGIWDSTTCRSIIYFHRLLRGFNLCAACLLHILWTFTLSPRSSCLTKFKHKSPHHISCAFFSLCVLYMLFSSHLFVLIIATSNLTSDHFMYVTQSCSILPMSYSRTTMFSLVMVTREAFLISLMALFSGYMVTLLWRHKKQVQHLHSTSLSSKSSPQQRATRTILLLMSFFVVLYILDIVIFQSRTKFKDGSMFYSLHIIVSHSYATISPFVFIFSDKRIIKFLGSMSGRIINICLFSDGYGP</sequence>
<organism>
    <name type="scientific">Rattus norvegicus</name>
    <name type="common">Rat</name>
    <dbReference type="NCBI Taxonomy" id="10116"/>
    <lineage>
        <taxon>Eukaryota</taxon>
        <taxon>Metazoa</taxon>
        <taxon>Chordata</taxon>
        <taxon>Craniata</taxon>
        <taxon>Vertebrata</taxon>
        <taxon>Euteleostomi</taxon>
        <taxon>Mammalia</taxon>
        <taxon>Eutheria</taxon>
        <taxon>Euarchontoglires</taxon>
        <taxon>Glires</taxon>
        <taxon>Rodentia</taxon>
        <taxon>Myomorpha</taxon>
        <taxon>Muroidea</taxon>
        <taxon>Muridae</taxon>
        <taxon>Murinae</taxon>
        <taxon>Rattus</taxon>
    </lineage>
</organism>
<gene>
    <name type="primary">Vom1r96</name>
    <name type="synonym">V1rb14</name>
</gene>
<reference evidence="5" key="1">
    <citation type="submission" date="2003-12" db="EMBL/GenBank/DDBJ databases">
        <title>Rat vomeronasal receptors.</title>
        <authorList>
            <person name="Capello L."/>
            <person name="Rodriguez I."/>
        </authorList>
    </citation>
    <scope>NUCLEOTIDE SEQUENCE [MRNA]</scope>
</reference>
<protein>
    <recommendedName>
        <fullName>Vomeronasal type-1 receptor 96</fullName>
    </recommendedName>
    <alternativeName>
        <fullName>Vomeronasal type-1 receptor B14</fullName>
    </alternativeName>
</protein>
<name>V1R96_RAT</name>
<proteinExistence type="evidence at transcript level"/>
<evidence type="ECO:0000250" key="1">
    <source>
        <dbReference type="UniProtKB" id="Q8VIC6"/>
    </source>
</evidence>
<evidence type="ECO:0000255" key="2"/>
<evidence type="ECO:0000255" key="3">
    <source>
        <dbReference type="PROSITE-ProRule" id="PRU00521"/>
    </source>
</evidence>
<evidence type="ECO:0000305" key="4"/>
<evidence type="ECO:0000312" key="5">
    <source>
        <dbReference type="EMBL" id="AAR87963.1"/>
    </source>
</evidence>
<feature type="chain" id="PRO_0000239985" description="Vomeronasal type-1 receptor 96">
    <location>
        <begin position="1"/>
        <end position="319"/>
    </location>
</feature>
<feature type="topological domain" description="Extracellular" evidence="2">
    <location>
        <begin position="1"/>
        <end position="19"/>
    </location>
</feature>
<feature type="transmembrane region" description="Helical; Name=1" evidence="2">
    <location>
        <begin position="20"/>
        <end position="40"/>
    </location>
</feature>
<feature type="topological domain" description="Cytoplasmic" evidence="2">
    <location>
        <begin position="41"/>
        <end position="49"/>
    </location>
</feature>
<feature type="transmembrane region" description="Helical; Name=2" evidence="2">
    <location>
        <begin position="50"/>
        <end position="70"/>
    </location>
</feature>
<feature type="topological domain" description="Extracellular" evidence="2">
    <location>
        <begin position="71"/>
        <end position="93"/>
    </location>
</feature>
<feature type="transmembrane region" description="Helical; Name=3" evidence="2">
    <location>
        <begin position="94"/>
        <end position="114"/>
    </location>
</feature>
<feature type="topological domain" description="Cytoplasmic" evidence="2">
    <location>
        <begin position="115"/>
        <end position="134"/>
    </location>
</feature>
<feature type="transmembrane region" description="Helical; Name=4" evidence="2">
    <location>
        <begin position="135"/>
        <end position="155"/>
    </location>
</feature>
<feature type="topological domain" description="Extracellular" evidence="2">
    <location>
        <begin position="156"/>
        <end position="193"/>
    </location>
</feature>
<feature type="transmembrane region" description="Helical; Name=5" evidence="2">
    <location>
        <begin position="194"/>
        <end position="214"/>
    </location>
</feature>
<feature type="topological domain" description="Cytoplasmic" evidence="2">
    <location>
        <begin position="215"/>
        <end position="238"/>
    </location>
</feature>
<feature type="transmembrane region" description="Helical; Name=6" evidence="2">
    <location>
        <begin position="239"/>
        <end position="259"/>
    </location>
</feature>
<feature type="topological domain" description="Extracellular" evidence="2">
    <location>
        <begin position="260"/>
        <end position="269"/>
    </location>
</feature>
<feature type="transmembrane region" description="Helical; Name=7" evidence="2">
    <location>
        <begin position="270"/>
        <end position="290"/>
    </location>
</feature>
<feature type="topological domain" description="Cytoplasmic" evidence="2">
    <location>
        <begin position="291"/>
        <end position="319"/>
    </location>
</feature>
<feature type="glycosylation site" description="N-linked (GlcNAc...) asparagine" evidence="2">
    <location>
        <position position="159"/>
    </location>
</feature>
<feature type="disulfide bond" evidence="3">
    <location>
        <begin position="85"/>
        <end position="172"/>
    </location>
</feature>
<dbReference type="EMBL" id="AY510296">
    <property type="protein sequence ID" value="AAR87963.1"/>
    <property type="molecule type" value="mRNA"/>
</dbReference>
<dbReference type="RefSeq" id="XP_038965001.1">
    <property type="nucleotide sequence ID" value="XM_039109073.1"/>
</dbReference>
<dbReference type="SMR" id="Q5J3L4"/>
<dbReference type="GlyCosmos" id="Q5J3L4">
    <property type="glycosylation" value="1 site, No reported glycans"/>
</dbReference>
<dbReference type="GlyGen" id="Q5J3L4">
    <property type="glycosylation" value="1 site"/>
</dbReference>
<dbReference type="PaxDb" id="10116-ENSRNOP00000043326"/>
<dbReference type="Ensembl" id="ENSRNOT00000080669.2">
    <property type="protein sequence ID" value="ENSRNOP00000070407.1"/>
    <property type="gene ID" value="ENSRNOG00000058628.2"/>
</dbReference>
<dbReference type="GeneID" id="494275"/>
<dbReference type="UCSC" id="RGD:1549781">
    <property type="organism name" value="rat"/>
</dbReference>
<dbReference type="AGR" id="RGD:1549781"/>
<dbReference type="RGD" id="1549781">
    <property type="gene designation" value="Vom1r96"/>
</dbReference>
<dbReference type="eggNOG" id="ENOG502SNRJ">
    <property type="taxonomic scope" value="Eukaryota"/>
</dbReference>
<dbReference type="GeneTree" id="ENSGT01030000234553"/>
<dbReference type="HOGENOM" id="CLU_058641_0_0_1"/>
<dbReference type="InParanoid" id="Q5J3L4"/>
<dbReference type="OMA" id="RIINICL"/>
<dbReference type="OrthoDB" id="9620038at2759"/>
<dbReference type="PhylomeDB" id="Q5J3L4"/>
<dbReference type="PRO" id="PR:Q5J3L4"/>
<dbReference type="Proteomes" id="UP000002494">
    <property type="component" value="Chromosome 4"/>
</dbReference>
<dbReference type="GO" id="GO:0005886">
    <property type="term" value="C:plasma membrane"/>
    <property type="evidence" value="ECO:0007669"/>
    <property type="project" value="UniProtKB-SubCell"/>
</dbReference>
<dbReference type="GO" id="GO:0016503">
    <property type="term" value="F:pheromone receptor activity"/>
    <property type="evidence" value="ECO:0007669"/>
    <property type="project" value="InterPro"/>
</dbReference>
<dbReference type="GO" id="GO:0019236">
    <property type="term" value="P:response to pheromone"/>
    <property type="evidence" value="ECO:0007669"/>
    <property type="project" value="UniProtKB-KW"/>
</dbReference>
<dbReference type="GO" id="GO:0007606">
    <property type="term" value="P:sensory perception of chemical stimulus"/>
    <property type="evidence" value="ECO:0007669"/>
    <property type="project" value="UniProtKB-ARBA"/>
</dbReference>
<dbReference type="CDD" id="cd13949">
    <property type="entry name" value="7tm_V1R_pheromone"/>
    <property type="match status" value="1"/>
</dbReference>
<dbReference type="FunFam" id="1.20.1070.10:FF:000051">
    <property type="entry name" value="Vomeronasal type-1 receptor"/>
    <property type="match status" value="1"/>
</dbReference>
<dbReference type="Gene3D" id="1.20.1070.10">
    <property type="entry name" value="Rhodopsin 7-helix transmembrane proteins"/>
    <property type="match status" value="1"/>
</dbReference>
<dbReference type="InterPro" id="IPR017452">
    <property type="entry name" value="GPCR_Rhodpsn_7TM"/>
</dbReference>
<dbReference type="InterPro" id="IPR004072">
    <property type="entry name" value="Vmron_rcpt_1"/>
</dbReference>
<dbReference type="PANTHER" id="PTHR24062">
    <property type="entry name" value="VOMERONASAL TYPE-1 RECEPTOR"/>
    <property type="match status" value="1"/>
</dbReference>
<dbReference type="Pfam" id="PF03402">
    <property type="entry name" value="V1R"/>
    <property type="match status" value="1"/>
</dbReference>
<dbReference type="PRINTS" id="PR01534">
    <property type="entry name" value="VOMERONASL1R"/>
</dbReference>
<dbReference type="SUPFAM" id="SSF81321">
    <property type="entry name" value="Family A G protein-coupled receptor-like"/>
    <property type="match status" value="1"/>
</dbReference>
<dbReference type="PROSITE" id="PS50262">
    <property type="entry name" value="G_PROTEIN_RECEP_F1_2"/>
    <property type="match status" value="1"/>
</dbReference>